<evidence type="ECO:0000255" key="1">
    <source>
        <dbReference type="HAMAP-Rule" id="MF_01639"/>
    </source>
</evidence>
<feature type="chain" id="PRO_0000269825" description="Pyridoxal kinase PdxY">
    <location>
        <begin position="1"/>
        <end position="290"/>
    </location>
</feature>
<feature type="binding site" evidence="1">
    <location>
        <position position="14"/>
    </location>
    <ligand>
        <name>substrate</name>
    </ligand>
</feature>
<feature type="binding site" evidence="1">
    <location>
        <position position="116"/>
    </location>
    <ligand>
        <name>ATP</name>
        <dbReference type="ChEBI" id="CHEBI:30616"/>
    </ligand>
</feature>
<feature type="binding site" evidence="1">
    <location>
        <position position="153"/>
    </location>
    <ligand>
        <name>ATP</name>
        <dbReference type="ChEBI" id="CHEBI:30616"/>
    </ligand>
</feature>
<feature type="binding site" evidence="1">
    <location>
        <position position="226"/>
    </location>
    <ligand>
        <name>substrate</name>
    </ligand>
</feature>
<reference key="1">
    <citation type="submission" date="2006-06" db="EMBL/GenBank/DDBJ databases">
        <title>Complete sequence of Rubrobacter xylanophilus DSM 9941.</title>
        <authorList>
            <consortium name="US DOE Joint Genome Institute"/>
            <person name="Copeland A."/>
            <person name="Lucas S."/>
            <person name="Lapidus A."/>
            <person name="Barry K."/>
            <person name="Detter J.C."/>
            <person name="Glavina del Rio T."/>
            <person name="Hammon N."/>
            <person name="Israni S."/>
            <person name="Dalin E."/>
            <person name="Tice H."/>
            <person name="Pitluck S."/>
            <person name="Munk A.C."/>
            <person name="Brettin T."/>
            <person name="Bruce D."/>
            <person name="Han C."/>
            <person name="Tapia R."/>
            <person name="Gilna P."/>
            <person name="Schmutz J."/>
            <person name="Larimer F."/>
            <person name="Land M."/>
            <person name="Hauser L."/>
            <person name="Kyrpides N."/>
            <person name="Lykidis A."/>
            <person name="da Costa M.S."/>
            <person name="Rainey F.A."/>
            <person name="Empadinhas N."/>
            <person name="Jolivet E."/>
            <person name="Battista J.R."/>
            <person name="Richardson P."/>
        </authorList>
    </citation>
    <scope>NUCLEOTIDE SEQUENCE [LARGE SCALE GENOMIC DNA]</scope>
    <source>
        <strain>DSM 9941 / JCM 11954 / NBRC 16129 / PRD-1</strain>
    </source>
</reference>
<protein>
    <recommendedName>
        <fullName evidence="1">Pyridoxal kinase PdxY</fullName>
        <shortName evidence="1">PL kinase</shortName>
        <ecNumber evidence="1">2.7.1.35</ecNumber>
    </recommendedName>
</protein>
<gene>
    <name evidence="1" type="primary">pdxY</name>
    <name type="ordered locus">Rxyl_0612</name>
</gene>
<dbReference type="EC" id="2.7.1.35" evidence="1"/>
<dbReference type="EMBL" id="CP000386">
    <property type="protein sequence ID" value="ABG03583.1"/>
    <property type="molecule type" value="Genomic_DNA"/>
</dbReference>
<dbReference type="SMR" id="Q1AYE5"/>
<dbReference type="STRING" id="266117.Rxyl_0612"/>
<dbReference type="KEGG" id="rxy:Rxyl_0612"/>
<dbReference type="eggNOG" id="COG2240">
    <property type="taxonomic scope" value="Bacteria"/>
</dbReference>
<dbReference type="HOGENOM" id="CLU_046496_3_1_11"/>
<dbReference type="PhylomeDB" id="Q1AYE5"/>
<dbReference type="UniPathway" id="UPA01068">
    <property type="reaction ID" value="UER00298"/>
</dbReference>
<dbReference type="Proteomes" id="UP000006637">
    <property type="component" value="Chromosome"/>
</dbReference>
<dbReference type="GO" id="GO:0005829">
    <property type="term" value="C:cytosol"/>
    <property type="evidence" value="ECO:0007669"/>
    <property type="project" value="TreeGrafter"/>
</dbReference>
<dbReference type="GO" id="GO:0005524">
    <property type="term" value="F:ATP binding"/>
    <property type="evidence" value="ECO:0007669"/>
    <property type="project" value="UniProtKB-UniRule"/>
</dbReference>
<dbReference type="GO" id="GO:0000287">
    <property type="term" value="F:magnesium ion binding"/>
    <property type="evidence" value="ECO:0007669"/>
    <property type="project" value="UniProtKB-UniRule"/>
</dbReference>
<dbReference type="GO" id="GO:0008478">
    <property type="term" value="F:pyridoxal kinase activity"/>
    <property type="evidence" value="ECO:0007669"/>
    <property type="project" value="UniProtKB-UniRule"/>
</dbReference>
<dbReference type="GO" id="GO:0009443">
    <property type="term" value="P:pyridoxal 5'-phosphate salvage"/>
    <property type="evidence" value="ECO:0007669"/>
    <property type="project" value="UniProtKB-UniRule"/>
</dbReference>
<dbReference type="CDD" id="cd01173">
    <property type="entry name" value="pyridoxal_pyridoxamine_kinase"/>
    <property type="match status" value="1"/>
</dbReference>
<dbReference type="Gene3D" id="3.40.1190.20">
    <property type="match status" value="1"/>
</dbReference>
<dbReference type="HAMAP" id="MF_01639">
    <property type="entry name" value="PdxY"/>
    <property type="match status" value="1"/>
</dbReference>
<dbReference type="InterPro" id="IPR013749">
    <property type="entry name" value="PM/HMP-P_kinase-1"/>
</dbReference>
<dbReference type="InterPro" id="IPR004625">
    <property type="entry name" value="PyrdxlKinase"/>
</dbReference>
<dbReference type="InterPro" id="IPR023685">
    <property type="entry name" value="Pyridoxal_kinase_PdxY"/>
</dbReference>
<dbReference type="InterPro" id="IPR029056">
    <property type="entry name" value="Ribokinase-like"/>
</dbReference>
<dbReference type="NCBIfam" id="NF004398">
    <property type="entry name" value="PRK05756.1"/>
    <property type="match status" value="1"/>
</dbReference>
<dbReference type="NCBIfam" id="TIGR00687">
    <property type="entry name" value="pyridox_kin"/>
    <property type="match status" value="1"/>
</dbReference>
<dbReference type="PANTHER" id="PTHR10534">
    <property type="entry name" value="PYRIDOXAL KINASE"/>
    <property type="match status" value="1"/>
</dbReference>
<dbReference type="PANTHER" id="PTHR10534:SF2">
    <property type="entry name" value="PYRIDOXAL KINASE"/>
    <property type="match status" value="1"/>
</dbReference>
<dbReference type="Pfam" id="PF08543">
    <property type="entry name" value="Phos_pyr_kin"/>
    <property type="match status" value="1"/>
</dbReference>
<dbReference type="SUPFAM" id="SSF53613">
    <property type="entry name" value="Ribokinase-like"/>
    <property type="match status" value="1"/>
</dbReference>
<keyword id="KW-0067">ATP-binding</keyword>
<keyword id="KW-0418">Kinase</keyword>
<keyword id="KW-0460">Magnesium</keyword>
<keyword id="KW-0547">Nucleotide-binding</keyword>
<keyword id="KW-1185">Reference proteome</keyword>
<keyword id="KW-0808">Transferase</keyword>
<accession>Q1AYE5</accession>
<sequence length="290" mass="30332">MSQGGGLNILSIQSSVAYGHVGNSAAVFPLQRLGIEVWAVNTVHFSNHTGYGEWRGPVLAAGDVSEVLRGIGERGVLGSCGAVLSGYMGDVSLGEVILGAVGRVRGANPQALFCCDPVMGDEGRGFFVRPGIPRFMRERAVPAADVVTPNQFELEYLAGVEVRTLGGALAAAEKVLGLGPGTVLVTSLRRRDAGEEGRIEMLAATREGAWLVGTPLLPLEVNGAGDATAALFLGHLLLGRGLEEALSLTASSVYAVLEKTLRRGAREIQLVAAQESLVAPPVRFPVRRVA</sequence>
<organism>
    <name type="scientific">Rubrobacter xylanophilus (strain DSM 9941 / JCM 11954 / NBRC 16129 / PRD-1)</name>
    <dbReference type="NCBI Taxonomy" id="266117"/>
    <lineage>
        <taxon>Bacteria</taxon>
        <taxon>Bacillati</taxon>
        <taxon>Actinomycetota</taxon>
        <taxon>Rubrobacteria</taxon>
        <taxon>Rubrobacterales</taxon>
        <taxon>Rubrobacteraceae</taxon>
        <taxon>Rubrobacter</taxon>
    </lineage>
</organism>
<name>PDXY_RUBXD</name>
<proteinExistence type="inferred from homology"/>
<comment type="function">
    <text evidence="1">Pyridoxal kinase involved in the salvage pathway of pyridoxal 5'-phosphate (PLP). Catalyzes the phosphorylation of pyridoxal to PLP.</text>
</comment>
<comment type="catalytic activity">
    <reaction evidence="1">
        <text>pyridoxal + ATP = pyridoxal 5'-phosphate + ADP + H(+)</text>
        <dbReference type="Rhea" id="RHEA:10224"/>
        <dbReference type="ChEBI" id="CHEBI:15378"/>
        <dbReference type="ChEBI" id="CHEBI:17310"/>
        <dbReference type="ChEBI" id="CHEBI:30616"/>
        <dbReference type="ChEBI" id="CHEBI:456216"/>
        <dbReference type="ChEBI" id="CHEBI:597326"/>
        <dbReference type="EC" id="2.7.1.35"/>
    </reaction>
</comment>
<comment type="cofactor">
    <cofactor evidence="1">
        <name>Mg(2+)</name>
        <dbReference type="ChEBI" id="CHEBI:18420"/>
    </cofactor>
</comment>
<comment type="pathway">
    <text evidence="1">Cofactor metabolism; pyridoxal 5'-phosphate salvage; pyridoxal 5'-phosphate from pyridoxal: step 1/1.</text>
</comment>
<comment type="subunit">
    <text evidence="1">Homodimer.</text>
</comment>
<comment type="similarity">
    <text evidence="1">Belongs to the pyridoxine kinase family. PdxY subfamily.</text>
</comment>